<feature type="chain" id="PRO_0000452995" description="FAD-dependent monooxygenase opaC">
    <location>
        <begin position="1"/>
        <end position="462"/>
    </location>
</feature>
<feature type="transmembrane region" description="Helical" evidence="4">
    <location>
        <begin position="14"/>
        <end position="34"/>
    </location>
</feature>
<feature type="active site" evidence="3">
    <location>
        <position position="193"/>
    </location>
</feature>
<feature type="binding site" evidence="2">
    <location>
        <position position="43"/>
    </location>
    <ligand>
        <name>FAD</name>
        <dbReference type="ChEBI" id="CHEBI:57692"/>
    </ligand>
</feature>
<feature type="binding site" evidence="2">
    <location>
        <position position="115"/>
    </location>
    <ligand>
        <name>FAD</name>
        <dbReference type="ChEBI" id="CHEBI:57692"/>
    </ligand>
</feature>
<feature type="binding site" evidence="2">
    <location>
        <position position="322"/>
    </location>
    <ligand>
        <name>FAD</name>
        <dbReference type="ChEBI" id="CHEBI:57692"/>
    </ligand>
</feature>
<feature type="binding site" evidence="2">
    <location>
        <position position="335"/>
    </location>
    <ligand>
        <name>FAD</name>
        <dbReference type="ChEBI" id="CHEBI:57692"/>
    </ligand>
</feature>
<feature type="glycosylation site" description="N-linked (GlcNAc...) asparagine" evidence="5">
    <location>
        <position position="10"/>
    </location>
</feature>
<feature type="glycosylation site" description="N-linked (GlcNAc...) asparagine" evidence="5">
    <location>
        <position position="60"/>
    </location>
</feature>
<accession>A0A0C1BV72</accession>
<sequence>MTVPQYIGPNRTGITVIIIGLGIGGLTAAISCHLQGHHVIGFDKLENLEPYGDGLILTPNGSQVLRDLDDTGAIAAWINTWAYNCRDCKIYNTDGVHVGQHPIPDTDKGLSLLPRGGLVQILYQTAKRLGLDLRLGVKINEFVEDVDQARVIIDGVHVQGDCIIFADGANSRGREAVSSCNVKPYYSGFSVYRGRADGAALIKDPQCHWLLSKEGAIDQATGFAGPEMYVQLATCGGGQASFCIGITQRFALQHTQSAENFWTTPIDKNEMLDKISYWKCINQIRPVIDKMAKDQFILCPLLRAGVLDSWVSPIGRIAVIGDAAHPFFPTSAQGAAQAIEDAATLAITLALAGKNNIRLGLKAMEAMRKHRATYIQRNAWRVNDAWFGSPVEERIGEKAAPAIGVIDWITEHCCRTYASNEFDRVQDSIATGQPYVPTNIPSQQFKEAAEWIANRNDEKEKN</sequence>
<proteinExistence type="evidence at protein level"/>
<organism>
    <name type="scientific">Aspergillus ustus</name>
    <dbReference type="NCBI Taxonomy" id="40382"/>
    <lineage>
        <taxon>Eukaryota</taxon>
        <taxon>Fungi</taxon>
        <taxon>Dikarya</taxon>
        <taxon>Ascomycota</taxon>
        <taxon>Pezizomycotina</taxon>
        <taxon>Eurotiomycetes</taxon>
        <taxon>Eurotiomycetidae</taxon>
        <taxon>Eurotiales</taxon>
        <taxon>Aspergillaceae</taxon>
        <taxon>Aspergillus</taxon>
        <taxon>Aspergillus subgen. Nidulantes</taxon>
    </lineage>
</organism>
<reference key="1">
    <citation type="journal article" date="2015" name="PLoS ONE">
        <title>A genomics based discovery of secondary metabolite biosynthetic gene clusters in Aspergillus ustus.</title>
        <authorList>
            <person name="Pi B."/>
            <person name="Yu D."/>
            <person name="Dai F."/>
            <person name="Song X."/>
            <person name="Zhu C."/>
            <person name="Li H."/>
            <person name="Yu Y."/>
        </authorList>
    </citation>
    <scope>NUCLEOTIDE SEQUENCE [LARGE SCALE GENOMIC DNA]</scope>
    <scope>IDENTIFICATION</scope>
    <source>
        <strain>3.3904</strain>
    </source>
</reference>
<reference key="2">
    <citation type="journal article" date="2020" name="Nat. Commun.">
        <title>Oxepinamide F biosynthesis involves enzymatic D-aminoacyl epimerization, 3H-oxepin formation, and hydroxylation induced double bond migration.</title>
        <authorList>
            <person name="Zheng L."/>
            <person name="Wang H."/>
            <person name="Fan A."/>
            <person name="Li S.M."/>
        </authorList>
    </citation>
    <scope>FUNCTION</scope>
    <scope>CATALYTIC ACTIVITY</scope>
    <scope>BIOPHYSICOCHEMICAL PROPERTIES</scope>
    <scope>DISRUPTION PHENOTYPE</scope>
    <scope>PATHWAY</scope>
</reference>
<name>OPAC_ASPUT</name>
<comment type="function">
    <text evidence="6">FAD-dependent monooxygenase; part of the gene cluster that mediates the biosynthesis of oxepinamides, derivatives of anthranilyl-containing tripeptides that share an oxepin ring and a fused pyrimidinone moiety (PubMed:33004788). The nonribosomal peptide synthetase (NRPS) opaA assembles the quinazolinone core with D-Phe incorporation (PubMed:33004788). The first adenylation domain (A1) of opaA loads and activates anthranilic acid whereas the second A domain (A2) is for activating of L-Phe, which is then converted to D-form by the E domain (PubMed:33004788). The third A domain (A3) is responsible for L-Ile activation and the terminal condensation domain C3 for cyclization and releasing the NRPS product protuboxepin K (PubMed:33004788). The cytochrome P450 monooxygenase opaB then catalyzes alone the oxepin ring formation to convert protuboxepin K into protuboxepin A (PubMed:33004788). The flavoenzyme opaC installs subsequently one hydroxyl group at the oxepin ring, accompanied by double bond migration, to form 15-epi-oxepinamide E (PubMed:33004788). The epimerase opaE changes the D-Phe residue back to L-form, leading to oxepinamide E, which is further methylated at the hydroxyl group at C-12 by the O-methyltransferase OpaF to yield oxepinamide F (PubMed:33004788).</text>
</comment>
<comment type="cofactor">
    <cofactor evidence="1">
        <name>FAD</name>
        <dbReference type="ChEBI" id="CHEBI:57692"/>
    </cofactor>
</comment>
<comment type="biophysicochemical properties">
    <kinetics>
        <KM evidence="6">0.43 mM for protuboxepin K</KM>
    </kinetics>
</comment>
<comment type="pathway">
    <text evidence="6">Secondary metabolite biosynthesis.</text>
</comment>
<comment type="subcellular location">
    <subcellularLocation>
        <location evidence="4">Membrane</location>
        <topology evidence="4">Single-pass membrane protein</topology>
    </subcellularLocation>
</comment>
<comment type="disruption phenotype">
    <text evidence="6">Abolishes the production of both oxepinamide F and oxepinamide E and leads to the accumulation of protuboxepin A.</text>
</comment>
<comment type="similarity">
    <text evidence="8">Belongs to the paxM FAD-dependent monooxygenase family.</text>
</comment>
<keyword id="KW-0274">FAD</keyword>
<keyword id="KW-0285">Flavoprotein</keyword>
<keyword id="KW-0325">Glycoprotein</keyword>
<keyword id="KW-0472">Membrane</keyword>
<keyword id="KW-0503">Monooxygenase</keyword>
<keyword id="KW-0560">Oxidoreductase</keyword>
<keyword id="KW-1185">Reference proteome</keyword>
<keyword id="KW-0812">Transmembrane</keyword>
<keyword id="KW-1133">Transmembrane helix</keyword>
<gene>
    <name evidence="7" type="primary">opaC</name>
    <name type="ORF">HK57_00063</name>
</gene>
<dbReference type="EC" id="1.-.-.-" evidence="6"/>
<dbReference type="EMBL" id="JOMC01000153">
    <property type="protein sequence ID" value="KIA75456.1"/>
    <property type="molecule type" value="Genomic_DNA"/>
</dbReference>
<dbReference type="SMR" id="A0A0C1BV72"/>
<dbReference type="GlyCosmos" id="A0A0C1BV72">
    <property type="glycosylation" value="2 sites, No reported glycans"/>
</dbReference>
<dbReference type="SABIO-RK" id="A0A0C1BV72"/>
<dbReference type="Proteomes" id="UP000053475">
    <property type="component" value="Unassembled WGS sequence"/>
</dbReference>
<dbReference type="GO" id="GO:0016020">
    <property type="term" value="C:membrane"/>
    <property type="evidence" value="ECO:0007669"/>
    <property type="project" value="UniProtKB-SubCell"/>
</dbReference>
<dbReference type="GO" id="GO:0071949">
    <property type="term" value="F:FAD binding"/>
    <property type="evidence" value="ECO:0007669"/>
    <property type="project" value="InterPro"/>
</dbReference>
<dbReference type="GO" id="GO:0004497">
    <property type="term" value="F:monooxygenase activity"/>
    <property type="evidence" value="ECO:0007669"/>
    <property type="project" value="UniProtKB-KW"/>
</dbReference>
<dbReference type="GO" id="GO:0009058">
    <property type="term" value="P:biosynthetic process"/>
    <property type="evidence" value="ECO:0007669"/>
    <property type="project" value="UniProtKB-ARBA"/>
</dbReference>
<dbReference type="Gene3D" id="3.50.50.60">
    <property type="entry name" value="FAD/NAD(P)-binding domain"/>
    <property type="match status" value="1"/>
</dbReference>
<dbReference type="InterPro" id="IPR002938">
    <property type="entry name" value="FAD-bd"/>
</dbReference>
<dbReference type="InterPro" id="IPR050493">
    <property type="entry name" value="FAD-dep_Monooxygenase_BioMet"/>
</dbReference>
<dbReference type="InterPro" id="IPR036188">
    <property type="entry name" value="FAD/NAD-bd_sf"/>
</dbReference>
<dbReference type="PANTHER" id="PTHR13789">
    <property type="entry name" value="MONOOXYGENASE"/>
    <property type="match status" value="1"/>
</dbReference>
<dbReference type="PANTHER" id="PTHR13789:SF236">
    <property type="entry name" value="MONOOXYGENASE, PUTATIVE (AFU_ORTHOLOGUE AFUA_6G12060)-RELATED"/>
    <property type="match status" value="1"/>
</dbReference>
<dbReference type="Pfam" id="PF01494">
    <property type="entry name" value="FAD_binding_3"/>
    <property type="match status" value="1"/>
</dbReference>
<dbReference type="PRINTS" id="PR00420">
    <property type="entry name" value="RNGMNOXGNASE"/>
</dbReference>
<dbReference type="SUPFAM" id="SSF51905">
    <property type="entry name" value="FAD/NAD(P)-binding domain"/>
    <property type="match status" value="1"/>
</dbReference>
<protein>
    <recommendedName>
        <fullName evidence="7">FAD-dependent monooxygenase opaC</fullName>
        <ecNumber evidence="6">1.-.-.-</ecNumber>
    </recommendedName>
    <alternativeName>
        <fullName evidence="7">Oxepinamide F biosynthesis cluster protein C</fullName>
    </alternativeName>
</protein>
<evidence type="ECO:0000250" key="1">
    <source>
        <dbReference type="UniProtKB" id="A6T923"/>
    </source>
</evidence>
<evidence type="ECO:0000250" key="2">
    <source>
        <dbReference type="UniProtKB" id="B8M9J8"/>
    </source>
</evidence>
<evidence type="ECO:0000250" key="3">
    <source>
        <dbReference type="UniProtKB" id="L0E4H0"/>
    </source>
</evidence>
<evidence type="ECO:0000255" key="4"/>
<evidence type="ECO:0000255" key="5">
    <source>
        <dbReference type="PROSITE-ProRule" id="PRU00498"/>
    </source>
</evidence>
<evidence type="ECO:0000269" key="6">
    <source>
    </source>
</evidence>
<evidence type="ECO:0000303" key="7">
    <source>
    </source>
</evidence>
<evidence type="ECO:0000305" key="8"/>